<evidence type="ECO:0000250" key="1">
    <source>
        <dbReference type="UniProtKB" id="O15162"/>
    </source>
</evidence>
<evidence type="ECO:0000250" key="2">
    <source>
        <dbReference type="UniProtKB" id="Q9NRQ2"/>
    </source>
</evidence>
<evidence type="ECO:0000255" key="3"/>
<evidence type="ECO:0000256" key="4">
    <source>
        <dbReference type="SAM" id="MobiDB-lite"/>
    </source>
</evidence>
<evidence type="ECO:0000305" key="5"/>
<evidence type="ECO:0000312" key="6">
    <source>
        <dbReference type="MGI" id="MGI:2143267"/>
    </source>
</evidence>
<reference key="1">
    <citation type="journal article" date="2005" name="Science">
        <title>The transcriptional landscape of the mammalian genome.</title>
        <authorList>
            <person name="Carninci P."/>
            <person name="Kasukawa T."/>
            <person name="Katayama S."/>
            <person name="Gough J."/>
            <person name="Frith M.C."/>
            <person name="Maeda N."/>
            <person name="Oyama R."/>
            <person name="Ravasi T."/>
            <person name="Lenhard B."/>
            <person name="Wells C."/>
            <person name="Kodzius R."/>
            <person name="Shimokawa K."/>
            <person name="Bajic V.B."/>
            <person name="Brenner S.E."/>
            <person name="Batalov S."/>
            <person name="Forrest A.R."/>
            <person name="Zavolan M."/>
            <person name="Davis M.J."/>
            <person name="Wilming L.G."/>
            <person name="Aidinis V."/>
            <person name="Allen J.E."/>
            <person name="Ambesi-Impiombato A."/>
            <person name="Apweiler R."/>
            <person name="Aturaliya R.N."/>
            <person name="Bailey T.L."/>
            <person name="Bansal M."/>
            <person name="Baxter L."/>
            <person name="Beisel K.W."/>
            <person name="Bersano T."/>
            <person name="Bono H."/>
            <person name="Chalk A.M."/>
            <person name="Chiu K.P."/>
            <person name="Choudhary V."/>
            <person name="Christoffels A."/>
            <person name="Clutterbuck D.R."/>
            <person name="Crowe M.L."/>
            <person name="Dalla E."/>
            <person name="Dalrymple B.P."/>
            <person name="de Bono B."/>
            <person name="Della Gatta G."/>
            <person name="di Bernardo D."/>
            <person name="Down T."/>
            <person name="Engstrom P."/>
            <person name="Fagiolini M."/>
            <person name="Faulkner G."/>
            <person name="Fletcher C.F."/>
            <person name="Fukushima T."/>
            <person name="Furuno M."/>
            <person name="Futaki S."/>
            <person name="Gariboldi M."/>
            <person name="Georgii-Hemming P."/>
            <person name="Gingeras T.R."/>
            <person name="Gojobori T."/>
            <person name="Green R.E."/>
            <person name="Gustincich S."/>
            <person name="Harbers M."/>
            <person name="Hayashi Y."/>
            <person name="Hensch T.K."/>
            <person name="Hirokawa N."/>
            <person name="Hill D."/>
            <person name="Huminiecki L."/>
            <person name="Iacono M."/>
            <person name="Ikeo K."/>
            <person name="Iwama A."/>
            <person name="Ishikawa T."/>
            <person name="Jakt M."/>
            <person name="Kanapin A."/>
            <person name="Katoh M."/>
            <person name="Kawasawa Y."/>
            <person name="Kelso J."/>
            <person name="Kitamura H."/>
            <person name="Kitano H."/>
            <person name="Kollias G."/>
            <person name="Krishnan S.P."/>
            <person name="Kruger A."/>
            <person name="Kummerfeld S.K."/>
            <person name="Kurochkin I.V."/>
            <person name="Lareau L.F."/>
            <person name="Lazarevic D."/>
            <person name="Lipovich L."/>
            <person name="Liu J."/>
            <person name="Liuni S."/>
            <person name="McWilliam S."/>
            <person name="Madan Babu M."/>
            <person name="Madera M."/>
            <person name="Marchionni L."/>
            <person name="Matsuda H."/>
            <person name="Matsuzawa S."/>
            <person name="Miki H."/>
            <person name="Mignone F."/>
            <person name="Miyake S."/>
            <person name="Morris K."/>
            <person name="Mottagui-Tabar S."/>
            <person name="Mulder N."/>
            <person name="Nakano N."/>
            <person name="Nakauchi H."/>
            <person name="Ng P."/>
            <person name="Nilsson R."/>
            <person name="Nishiguchi S."/>
            <person name="Nishikawa S."/>
            <person name="Nori F."/>
            <person name="Ohara O."/>
            <person name="Okazaki Y."/>
            <person name="Orlando V."/>
            <person name="Pang K.C."/>
            <person name="Pavan W.J."/>
            <person name="Pavesi G."/>
            <person name="Pesole G."/>
            <person name="Petrovsky N."/>
            <person name="Piazza S."/>
            <person name="Reed J."/>
            <person name="Reid J.F."/>
            <person name="Ring B.Z."/>
            <person name="Ringwald M."/>
            <person name="Rost B."/>
            <person name="Ruan Y."/>
            <person name="Salzberg S.L."/>
            <person name="Sandelin A."/>
            <person name="Schneider C."/>
            <person name="Schoenbach C."/>
            <person name="Sekiguchi K."/>
            <person name="Semple C.A."/>
            <person name="Seno S."/>
            <person name="Sessa L."/>
            <person name="Sheng Y."/>
            <person name="Shibata Y."/>
            <person name="Shimada H."/>
            <person name="Shimada K."/>
            <person name="Silva D."/>
            <person name="Sinclair B."/>
            <person name="Sperling S."/>
            <person name="Stupka E."/>
            <person name="Sugiura K."/>
            <person name="Sultana R."/>
            <person name="Takenaka Y."/>
            <person name="Taki K."/>
            <person name="Tammoja K."/>
            <person name="Tan S.L."/>
            <person name="Tang S."/>
            <person name="Taylor M.S."/>
            <person name="Tegner J."/>
            <person name="Teichmann S.A."/>
            <person name="Ueda H.R."/>
            <person name="van Nimwegen E."/>
            <person name="Verardo R."/>
            <person name="Wei C.L."/>
            <person name="Yagi K."/>
            <person name="Yamanishi H."/>
            <person name="Zabarovsky E."/>
            <person name="Zhu S."/>
            <person name="Zimmer A."/>
            <person name="Hide W."/>
            <person name="Bult C."/>
            <person name="Grimmond S.M."/>
            <person name="Teasdale R.D."/>
            <person name="Liu E.T."/>
            <person name="Brusic V."/>
            <person name="Quackenbush J."/>
            <person name="Wahlestedt C."/>
            <person name="Mattick J.S."/>
            <person name="Hume D.A."/>
            <person name="Kai C."/>
            <person name="Sasaki D."/>
            <person name="Tomaru Y."/>
            <person name="Fukuda S."/>
            <person name="Kanamori-Katayama M."/>
            <person name="Suzuki M."/>
            <person name="Aoki J."/>
            <person name="Arakawa T."/>
            <person name="Iida J."/>
            <person name="Imamura K."/>
            <person name="Itoh M."/>
            <person name="Kato T."/>
            <person name="Kawaji H."/>
            <person name="Kawagashira N."/>
            <person name="Kawashima T."/>
            <person name="Kojima M."/>
            <person name="Kondo S."/>
            <person name="Konno H."/>
            <person name="Nakano K."/>
            <person name="Ninomiya N."/>
            <person name="Nishio T."/>
            <person name="Okada M."/>
            <person name="Plessy C."/>
            <person name="Shibata K."/>
            <person name="Shiraki T."/>
            <person name="Suzuki S."/>
            <person name="Tagami M."/>
            <person name="Waki K."/>
            <person name="Watahiki A."/>
            <person name="Okamura-Oho Y."/>
            <person name="Suzuki H."/>
            <person name="Kawai J."/>
            <person name="Hayashizaki Y."/>
        </authorList>
    </citation>
    <scope>NUCLEOTIDE SEQUENCE [LARGE SCALE MRNA]</scope>
    <source>
        <strain>C57BL/6J</strain>
        <tissue>Cerebellum</tissue>
        <tissue>Hippocampus</tissue>
        <tissue>Lung</tissue>
    </source>
</reference>
<reference key="2">
    <citation type="journal article" date="2004" name="Genome Res.">
        <title>The status, quality, and expansion of the NIH full-length cDNA project: the Mammalian Gene Collection (MGC).</title>
        <authorList>
            <consortium name="The MGC Project Team"/>
        </authorList>
    </citation>
    <scope>NUCLEOTIDE SEQUENCE [LARGE SCALE MRNA]</scope>
    <source>
        <strain>C57BL/6J</strain>
        <tissue>Brain</tissue>
    </source>
</reference>
<organism>
    <name type="scientific">Mus musculus</name>
    <name type="common">Mouse</name>
    <dbReference type="NCBI Taxonomy" id="10090"/>
    <lineage>
        <taxon>Eukaryota</taxon>
        <taxon>Metazoa</taxon>
        <taxon>Chordata</taxon>
        <taxon>Craniata</taxon>
        <taxon>Vertebrata</taxon>
        <taxon>Euteleostomi</taxon>
        <taxon>Mammalia</taxon>
        <taxon>Eutheria</taxon>
        <taxon>Euarchontoglires</taxon>
        <taxon>Glires</taxon>
        <taxon>Rodentia</taxon>
        <taxon>Myomorpha</taxon>
        <taxon>Muroidea</taxon>
        <taxon>Muridae</taxon>
        <taxon>Murinae</taxon>
        <taxon>Mus</taxon>
        <taxon>Mus</taxon>
    </lineage>
</organism>
<comment type="function">
    <text evidence="2">Catalyzes metal ion-induced ATP-independent rapid bidirectional and non-specific movement of phospholipids (lipid scrambling or lipid flip-flop) between the inner and outer leaflet of the plasma membrane and participates in the redistribution of phospholipids between membrane leaflets. Metal ions bind to the calcium-binding site and induce conformation change in the protein. Has a greater affi nity for Ca(2+) than Mg(2+) and Zn(2+).</text>
</comment>
<comment type="catalytic activity">
    <reaction evidence="2">
        <text>a 1,2-diacyl-sn-glycero-3-phosphocholine(in) = a 1,2-diacyl-sn-glycero-3-phosphocholine(out)</text>
        <dbReference type="Rhea" id="RHEA:38571"/>
        <dbReference type="ChEBI" id="CHEBI:57643"/>
    </reaction>
    <physiologicalReaction direction="left-to-right" evidence="2">
        <dbReference type="Rhea" id="RHEA:38572"/>
    </physiologicalReaction>
    <physiologicalReaction direction="right-to-left" evidence="2">
        <dbReference type="Rhea" id="RHEA:38573"/>
    </physiologicalReaction>
</comment>
<comment type="catalytic activity">
    <reaction evidence="2">
        <text>a 1,2-diacyl-sn-glycero-3-phospho-L-serine(in) = a 1,2-diacyl-sn-glycero-3-phospho-L-serine(out)</text>
        <dbReference type="Rhea" id="RHEA:38663"/>
        <dbReference type="ChEBI" id="CHEBI:57262"/>
    </reaction>
    <physiologicalReaction direction="left-to-right" evidence="2">
        <dbReference type="Rhea" id="RHEA:38664"/>
    </physiologicalReaction>
    <physiologicalReaction direction="right-to-left" evidence="2">
        <dbReference type="Rhea" id="RHEA:38665"/>
    </physiologicalReaction>
</comment>
<comment type="cofactor">
    <cofactor evidence="2">
        <name>Ca(2+)</name>
        <dbReference type="ChEBI" id="CHEBI:29108"/>
    </cofactor>
    <cofactor evidence="2">
        <name>Mg(2+)</name>
        <dbReference type="ChEBI" id="CHEBI:18420"/>
    </cofactor>
    <cofactor evidence="2">
        <name>Zn(2+)</name>
        <dbReference type="ChEBI" id="CHEBI:29105"/>
    </cofactor>
</comment>
<comment type="subunit">
    <text evidence="2">Interacts with PDCD6. Interacts with KPNA2; this interaction mediates the nucleus import of PLSCR4.</text>
</comment>
<comment type="subcellular location">
    <subcellularLocation>
        <location evidence="2">Cell membrane</location>
        <topology evidence="1">Single-pass type II membrane protein</topology>
    </subcellularLocation>
    <subcellularLocation>
        <location evidence="2">Cell membrane</location>
        <topology evidence="2">Lipid-anchor</topology>
        <orientation evidence="1">Cytoplasmic side</orientation>
    </subcellularLocation>
    <subcellularLocation>
        <location evidence="2">Nucleus</location>
    </subcellularLocation>
    <text evidence="2">Palmitoylation regulates its localization to the cell membrane or the nucleus; trafficking to the cell membrane is dependent upon palmitoylation whereas in the absence of palmitoylation, localizes to the nucleus.</text>
</comment>
<comment type="domain">
    <text evidence="1">The N-terminal proline-rich domain (PRD) is required for phospholipid scramblase activity.</text>
</comment>
<comment type="similarity">
    <text evidence="5">Belongs to the phospholipid scramblase family.</text>
</comment>
<proteinExistence type="evidence at transcript level"/>
<feature type="chain" id="PRO_0000100793" description="Phospholipid scramblase 4">
    <location>
        <begin position="1"/>
        <end position="326"/>
    </location>
</feature>
<feature type="topological domain" description="Cytoplasmic" evidence="1">
    <location>
        <begin position="1"/>
        <end position="299"/>
    </location>
</feature>
<feature type="transmembrane region" description="Helical" evidence="1">
    <location>
        <begin position="300"/>
        <end position="316"/>
    </location>
</feature>
<feature type="topological domain" description="Extracellular" evidence="1">
    <location>
        <begin position="317"/>
        <end position="326"/>
    </location>
</feature>
<feature type="region of interest" description="Proline-rich domain (PRD)" evidence="1">
    <location>
        <begin position="1"/>
        <end position="94"/>
    </location>
</feature>
<feature type="region of interest" description="Disordered" evidence="4">
    <location>
        <begin position="1"/>
        <end position="32"/>
    </location>
</feature>
<feature type="short sequence motif" description="SH3-binding 1" evidence="3">
    <location>
        <begin position="18"/>
        <end position="25"/>
    </location>
</feature>
<feature type="short sequence motif" description="PPxY motif" evidence="3">
    <location>
        <begin position="30"/>
        <end position="33"/>
    </location>
</feature>
<feature type="short sequence motif" description="SH3-binding 2" evidence="3">
    <location>
        <begin position="41"/>
        <end position="49"/>
    </location>
</feature>
<feature type="short sequence motif" description="SH3-binding 3" evidence="3">
    <location>
        <begin position="94"/>
        <end position="102"/>
    </location>
</feature>
<feature type="modified residue" description="Phosphotyrosine; by ABL" evidence="1">
    <location>
        <position position="79"/>
    </location>
</feature>
<feature type="modified residue" description="Phosphotyrosine; by ABL" evidence="1">
    <location>
        <position position="84"/>
    </location>
</feature>
<feature type="lipid moiety-binding region" description="S-palmitoyl cysteine" evidence="1">
    <location>
        <position position="193"/>
    </location>
</feature>
<feature type="lipid moiety-binding region" description="S-palmitoyl cysteine" evidence="1">
    <location>
        <position position="194"/>
    </location>
</feature>
<feature type="lipid moiety-binding region" description="S-palmitoyl cysteine" evidence="1">
    <location>
        <position position="195"/>
    </location>
</feature>
<feature type="lipid moiety-binding region" description="S-palmitoyl cysteine" evidence="1">
    <location>
        <position position="197"/>
    </location>
</feature>
<feature type="lipid moiety-binding region" description="S-palmitoyl cysteine" evidence="1">
    <location>
        <position position="198"/>
    </location>
</feature>
<accession>P58196</accession>
<accession>Q3TMI2</accession>
<accession>Q8BH62</accession>
<gene>
    <name evidence="6" type="primary">Plscr4</name>
</gene>
<name>PLS4_MOUSE</name>
<dbReference type="EMBL" id="AK035919">
    <property type="protein sequence ID" value="BAC29242.1"/>
    <property type="molecule type" value="mRNA"/>
</dbReference>
<dbReference type="EMBL" id="AK082330">
    <property type="protein sequence ID" value="BAC38468.1"/>
    <property type="molecule type" value="mRNA"/>
</dbReference>
<dbReference type="EMBL" id="AK141580">
    <property type="protein sequence ID" value="BAE24748.1"/>
    <property type="molecule type" value="mRNA"/>
</dbReference>
<dbReference type="EMBL" id="AK165919">
    <property type="protein sequence ID" value="BAE38460.1"/>
    <property type="molecule type" value="mRNA"/>
</dbReference>
<dbReference type="EMBL" id="BC052067">
    <property type="protein sequence ID" value="AAH52067.1"/>
    <property type="molecule type" value="mRNA"/>
</dbReference>
<dbReference type="CCDS" id="CCDS23407.1"/>
<dbReference type="RefSeq" id="NP_848826.1">
    <property type="nucleotide sequence ID" value="NM_178711.4"/>
</dbReference>
<dbReference type="FunCoup" id="P58196">
    <property type="interactions" value="133"/>
</dbReference>
<dbReference type="STRING" id="10090.ENSMUSP00000034941"/>
<dbReference type="PhosphoSitePlus" id="P58196"/>
<dbReference type="SwissPalm" id="P58196"/>
<dbReference type="PaxDb" id="10090-ENSMUSP00000034941"/>
<dbReference type="PeptideAtlas" id="P58196"/>
<dbReference type="ProteomicsDB" id="289626"/>
<dbReference type="Antibodypedia" id="948">
    <property type="antibodies" value="124 antibodies from 25 providers"/>
</dbReference>
<dbReference type="DNASU" id="235527"/>
<dbReference type="Ensembl" id="ENSMUST00000034941.9">
    <property type="protein sequence ID" value="ENSMUSP00000034941.8"/>
    <property type="gene ID" value="ENSMUSG00000032377.9"/>
</dbReference>
<dbReference type="GeneID" id="235527"/>
<dbReference type="KEGG" id="mmu:235527"/>
<dbReference type="UCSC" id="uc009ras.1">
    <property type="organism name" value="mouse"/>
</dbReference>
<dbReference type="AGR" id="MGI:2143267"/>
<dbReference type="CTD" id="57088"/>
<dbReference type="MGI" id="MGI:2143267">
    <property type="gene designation" value="Plscr4"/>
</dbReference>
<dbReference type="VEuPathDB" id="HostDB:ENSMUSG00000032377"/>
<dbReference type="eggNOG" id="KOG0621">
    <property type="taxonomic scope" value="Eukaryota"/>
</dbReference>
<dbReference type="GeneTree" id="ENSGT00940000161947"/>
<dbReference type="HOGENOM" id="CLU_053024_0_0_1"/>
<dbReference type="InParanoid" id="P58196"/>
<dbReference type="OMA" id="MMTSFET"/>
<dbReference type="OrthoDB" id="191150at2759"/>
<dbReference type="PhylomeDB" id="P58196"/>
<dbReference type="TreeFam" id="TF314939"/>
<dbReference type="BRENDA" id="7.6.2.1">
    <property type="organism ID" value="3474"/>
</dbReference>
<dbReference type="BioGRID-ORCS" id="235527">
    <property type="hits" value="4 hits in 80 CRISPR screens"/>
</dbReference>
<dbReference type="PRO" id="PR:P58196"/>
<dbReference type="Proteomes" id="UP000000589">
    <property type="component" value="Chromosome 9"/>
</dbReference>
<dbReference type="RNAct" id="P58196">
    <property type="molecule type" value="protein"/>
</dbReference>
<dbReference type="Bgee" id="ENSMUSG00000032377">
    <property type="expression patterns" value="Expressed in sciatic nerve and 150 other cell types or tissues"/>
</dbReference>
<dbReference type="GO" id="GO:0005634">
    <property type="term" value="C:nucleus"/>
    <property type="evidence" value="ECO:0000250"/>
    <property type="project" value="UniProtKB"/>
</dbReference>
<dbReference type="GO" id="GO:0005886">
    <property type="term" value="C:plasma membrane"/>
    <property type="evidence" value="ECO:0007669"/>
    <property type="project" value="UniProtKB-SubCell"/>
</dbReference>
<dbReference type="GO" id="GO:0042609">
    <property type="term" value="F:CD4 receptor binding"/>
    <property type="evidence" value="ECO:0007669"/>
    <property type="project" value="Ensembl"/>
</dbReference>
<dbReference type="GO" id="GO:0019899">
    <property type="term" value="F:enzyme binding"/>
    <property type="evidence" value="ECO:0007669"/>
    <property type="project" value="Ensembl"/>
</dbReference>
<dbReference type="GO" id="GO:0017128">
    <property type="term" value="F:phospholipid scramblase activity"/>
    <property type="evidence" value="ECO:0000250"/>
    <property type="project" value="UniProtKB"/>
</dbReference>
<dbReference type="GO" id="GO:0061590">
    <property type="term" value="P:calcium activated phosphatidylcholine scrambling"/>
    <property type="evidence" value="ECO:0000250"/>
    <property type="project" value="UniProtKB"/>
</dbReference>
<dbReference type="GO" id="GO:0061589">
    <property type="term" value="P:calcium activated phosphatidylserine scrambling"/>
    <property type="evidence" value="ECO:0000250"/>
    <property type="project" value="UniProtKB"/>
</dbReference>
<dbReference type="GO" id="GO:0071222">
    <property type="term" value="P:cellular response to lipopolysaccharide"/>
    <property type="evidence" value="ECO:0000270"/>
    <property type="project" value="UniProtKB"/>
</dbReference>
<dbReference type="InterPro" id="IPR005552">
    <property type="entry name" value="Scramblase"/>
</dbReference>
<dbReference type="PANTHER" id="PTHR23248:SF28">
    <property type="entry name" value="PHOSPHOLIPID SCRAMBLASE 4"/>
    <property type="match status" value="1"/>
</dbReference>
<dbReference type="PANTHER" id="PTHR23248">
    <property type="entry name" value="PHOSPHOLIPID SCRAMBLASE-RELATED"/>
    <property type="match status" value="1"/>
</dbReference>
<dbReference type="Pfam" id="PF03803">
    <property type="entry name" value="Scramblase"/>
    <property type="match status" value="1"/>
</dbReference>
<protein>
    <recommendedName>
        <fullName evidence="5">Phospholipid scramblase 4</fullName>
        <shortName>PL scramblase 4</shortName>
    </recommendedName>
    <alternativeName>
        <fullName>Ca(2+)-dependent phospholipid scramblase 4</fullName>
    </alternativeName>
</protein>
<sequence length="326" mass="36579">MSGLVPTAPEQPTEEMENQIKSPTAVPDAPPDYNSHFAPGPAGPVASPSAGLPMGYYIPQQPGAIPLYHPTGGTHPIQYQPGKYPVTNQPAPIMWMAGPAPVPNCPPGLEYLAQLDNIHVLQHVEPLELMTRFETNNRYDIKNNIDQMVYIVTEDTDDFTRNAYRNLRPFVLRVTDCLGREIMTMQRPFRCTCCCFCCPCARQELEVQCPPGVTIGFVAEHWNLCRASYSIQNEKKESMMRVRGPCATYGCGSDSVFEINSLDGVSNIGSIIRKWNGFLSTMVNADHFEIRFPLALDVKMKAMIFGSCFLIDFMYFERPPPRRMSR</sequence>
<keyword id="KW-0106">Calcium</keyword>
<keyword id="KW-1003">Cell membrane</keyword>
<keyword id="KW-0449">Lipoprotein</keyword>
<keyword id="KW-0472">Membrane</keyword>
<keyword id="KW-0539">Nucleus</keyword>
<keyword id="KW-0564">Palmitate</keyword>
<keyword id="KW-0597">Phosphoprotein</keyword>
<keyword id="KW-1185">Reference proteome</keyword>
<keyword id="KW-0812">Transmembrane</keyword>
<keyword id="KW-1133">Transmembrane helix</keyword>